<protein>
    <recommendedName>
        <fullName evidence="1">3-phosphoshikimate 1-carboxyvinyltransferase</fullName>
        <ecNumber evidence="1">2.5.1.19</ecNumber>
    </recommendedName>
    <alternativeName>
        <fullName evidence="1">5-enolpyruvylshikimate-3-phosphate synthase</fullName>
        <shortName evidence="1">EPSP synthase</shortName>
        <shortName evidence="1">EPSPS</shortName>
    </alternativeName>
</protein>
<proteinExistence type="inferred from homology"/>
<evidence type="ECO:0000255" key="1">
    <source>
        <dbReference type="HAMAP-Rule" id="MF_00210"/>
    </source>
</evidence>
<comment type="function">
    <text evidence="1">Catalyzes the transfer of the enolpyruvyl moiety of phosphoenolpyruvate (PEP) to the 5-hydroxyl of shikimate-3-phosphate (S3P) to produce enolpyruvyl shikimate-3-phosphate and inorganic phosphate.</text>
</comment>
<comment type="catalytic activity">
    <reaction evidence="1">
        <text>3-phosphoshikimate + phosphoenolpyruvate = 5-O-(1-carboxyvinyl)-3-phosphoshikimate + phosphate</text>
        <dbReference type="Rhea" id="RHEA:21256"/>
        <dbReference type="ChEBI" id="CHEBI:43474"/>
        <dbReference type="ChEBI" id="CHEBI:57701"/>
        <dbReference type="ChEBI" id="CHEBI:58702"/>
        <dbReference type="ChEBI" id="CHEBI:145989"/>
        <dbReference type="EC" id="2.5.1.19"/>
    </reaction>
    <physiologicalReaction direction="left-to-right" evidence="1">
        <dbReference type="Rhea" id="RHEA:21257"/>
    </physiologicalReaction>
</comment>
<comment type="pathway">
    <text evidence="1">Metabolic intermediate biosynthesis; chorismate biosynthesis; chorismate from D-erythrose 4-phosphate and phosphoenolpyruvate: step 6/7.</text>
</comment>
<comment type="subunit">
    <text evidence="1">Monomer.</text>
</comment>
<comment type="subcellular location">
    <subcellularLocation>
        <location evidence="1">Cytoplasm</location>
    </subcellularLocation>
</comment>
<comment type="similarity">
    <text evidence="1">Belongs to the EPSP synthase family.</text>
</comment>
<keyword id="KW-0028">Amino-acid biosynthesis</keyword>
<keyword id="KW-0057">Aromatic amino acid biosynthesis</keyword>
<keyword id="KW-0963">Cytoplasm</keyword>
<keyword id="KW-0808">Transferase</keyword>
<organism>
    <name type="scientific">Escherichia coli O157:H7 (strain EC4115 / EHEC)</name>
    <dbReference type="NCBI Taxonomy" id="444450"/>
    <lineage>
        <taxon>Bacteria</taxon>
        <taxon>Pseudomonadati</taxon>
        <taxon>Pseudomonadota</taxon>
        <taxon>Gammaproteobacteria</taxon>
        <taxon>Enterobacterales</taxon>
        <taxon>Enterobacteriaceae</taxon>
        <taxon>Escherichia</taxon>
    </lineage>
</organism>
<name>AROA_ECO5E</name>
<reference key="1">
    <citation type="journal article" date="2011" name="Proc. Natl. Acad. Sci. U.S.A.">
        <title>Genomic anatomy of Escherichia coli O157:H7 outbreaks.</title>
        <authorList>
            <person name="Eppinger M."/>
            <person name="Mammel M.K."/>
            <person name="Leclerc J.E."/>
            <person name="Ravel J."/>
            <person name="Cebula T.A."/>
        </authorList>
    </citation>
    <scope>NUCLEOTIDE SEQUENCE [LARGE SCALE GENOMIC DNA]</scope>
    <source>
        <strain>EC4115 / EHEC</strain>
    </source>
</reference>
<accession>B5YT42</accession>
<gene>
    <name evidence="1" type="primary">aroA</name>
    <name type="ordered locus">ECH74115_1069</name>
</gene>
<feature type="chain" id="PRO_1000099699" description="3-phosphoshikimate 1-carboxyvinyltransferase">
    <location>
        <begin position="1"/>
        <end position="427"/>
    </location>
</feature>
<feature type="active site" description="Proton acceptor" evidence="1">
    <location>
        <position position="313"/>
    </location>
</feature>
<feature type="binding site" evidence="1">
    <location>
        <position position="22"/>
    </location>
    <ligand>
        <name>3-phosphoshikimate</name>
        <dbReference type="ChEBI" id="CHEBI:145989"/>
    </ligand>
</feature>
<feature type="binding site" evidence="1">
    <location>
        <position position="22"/>
    </location>
    <ligand>
        <name>phosphoenolpyruvate</name>
        <dbReference type="ChEBI" id="CHEBI:58702"/>
    </ligand>
</feature>
<feature type="binding site" evidence="1">
    <location>
        <position position="23"/>
    </location>
    <ligand>
        <name>3-phosphoshikimate</name>
        <dbReference type="ChEBI" id="CHEBI:145989"/>
    </ligand>
</feature>
<feature type="binding site" evidence="1">
    <location>
        <position position="27"/>
    </location>
    <ligand>
        <name>3-phosphoshikimate</name>
        <dbReference type="ChEBI" id="CHEBI:145989"/>
    </ligand>
</feature>
<feature type="binding site" evidence="1">
    <location>
        <position position="96"/>
    </location>
    <ligand>
        <name>phosphoenolpyruvate</name>
        <dbReference type="ChEBI" id="CHEBI:58702"/>
    </ligand>
</feature>
<feature type="binding site" evidence="1">
    <location>
        <position position="124"/>
    </location>
    <ligand>
        <name>phosphoenolpyruvate</name>
        <dbReference type="ChEBI" id="CHEBI:58702"/>
    </ligand>
</feature>
<feature type="binding site" evidence="1">
    <location>
        <position position="169"/>
    </location>
    <ligand>
        <name>3-phosphoshikimate</name>
        <dbReference type="ChEBI" id="CHEBI:145989"/>
    </ligand>
</feature>
<feature type="binding site" evidence="1">
    <location>
        <position position="170"/>
    </location>
    <ligand>
        <name>3-phosphoshikimate</name>
        <dbReference type="ChEBI" id="CHEBI:145989"/>
    </ligand>
</feature>
<feature type="binding site" evidence="1">
    <location>
        <position position="171"/>
    </location>
    <ligand>
        <name>3-phosphoshikimate</name>
        <dbReference type="ChEBI" id="CHEBI:145989"/>
    </ligand>
</feature>
<feature type="binding site" evidence="1">
    <location>
        <position position="171"/>
    </location>
    <ligand>
        <name>phosphoenolpyruvate</name>
        <dbReference type="ChEBI" id="CHEBI:58702"/>
    </ligand>
</feature>
<feature type="binding site" evidence="1">
    <location>
        <position position="197"/>
    </location>
    <ligand>
        <name>3-phosphoshikimate</name>
        <dbReference type="ChEBI" id="CHEBI:145989"/>
    </ligand>
</feature>
<feature type="binding site" evidence="1">
    <location>
        <position position="313"/>
    </location>
    <ligand>
        <name>3-phosphoshikimate</name>
        <dbReference type="ChEBI" id="CHEBI:145989"/>
    </ligand>
</feature>
<feature type="binding site" evidence="1">
    <location>
        <position position="336"/>
    </location>
    <ligand>
        <name>3-phosphoshikimate</name>
        <dbReference type="ChEBI" id="CHEBI:145989"/>
    </ligand>
</feature>
<feature type="binding site" evidence="1">
    <location>
        <position position="340"/>
    </location>
    <ligand>
        <name>3-phosphoshikimate</name>
        <dbReference type="ChEBI" id="CHEBI:145989"/>
    </ligand>
</feature>
<feature type="binding site" evidence="1">
    <location>
        <position position="344"/>
    </location>
    <ligand>
        <name>phosphoenolpyruvate</name>
        <dbReference type="ChEBI" id="CHEBI:58702"/>
    </ligand>
</feature>
<feature type="binding site" evidence="1">
    <location>
        <position position="386"/>
    </location>
    <ligand>
        <name>phosphoenolpyruvate</name>
        <dbReference type="ChEBI" id="CHEBI:58702"/>
    </ligand>
</feature>
<feature type="binding site" evidence="1">
    <location>
        <position position="411"/>
    </location>
    <ligand>
        <name>phosphoenolpyruvate</name>
        <dbReference type="ChEBI" id="CHEBI:58702"/>
    </ligand>
</feature>
<dbReference type="EC" id="2.5.1.19" evidence="1"/>
<dbReference type="EMBL" id="CP001164">
    <property type="protein sequence ID" value="ACI39126.1"/>
    <property type="molecule type" value="Genomic_DNA"/>
</dbReference>
<dbReference type="RefSeq" id="WP_000445231.1">
    <property type="nucleotide sequence ID" value="NC_011353.1"/>
</dbReference>
<dbReference type="SMR" id="B5YT42"/>
<dbReference type="GeneID" id="93776510"/>
<dbReference type="KEGG" id="ecf:ECH74115_1069"/>
<dbReference type="HOGENOM" id="CLU_024321_0_0_6"/>
<dbReference type="UniPathway" id="UPA00053">
    <property type="reaction ID" value="UER00089"/>
</dbReference>
<dbReference type="GO" id="GO:0005737">
    <property type="term" value="C:cytoplasm"/>
    <property type="evidence" value="ECO:0007669"/>
    <property type="project" value="UniProtKB-SubCell"/>
</dbReference>
<dbReference type="GO" id="GO:0003866">
    <property type="term" value="F:3-phosphoshikimate 1-carboxyvinyltransferase activity"/>
    <property type="evidence" value="ECO:0007669"/>
    <property type="project" value="UniProtKB-UniRule"/>
</dbReference>
<dbReference type="GO" id="GO:0008652">
    <property type="term" value="P:amino acid biosynthetic process"/>
    <property type="evidence" value="ECO:0007669"/>
    <property type="project" value="UniProtKB-KW"/>
</dbReference>
<dbReference type="GO" id="GO:0009073">
    <property type="term" value="P:aromatic amino acid family biosynthetic process"/>
    <property type="evidence" value="ECO:0007669"/>
    <property type="project" value="UniProtKB-KW"/>
</dbReference>
<dbReference type="GO" id="GO:0009423">
    <property type="term" value="P:chorismate biosynthetic process"/>
    <property type="evidence" value="ECO:0007669"/>
    <property type="project" value="UniProtKB-UniRule"/>
</dbReference>
<dbReference type="CDD" id="cd01554">
    <property type="entry name" value="EPT-like"/>
    <property type="match status" value="1"/>
</dbReference>
<dbReference type="FunFam" id="3.65.10.10:FF:000003">
    <property type="entry name" value="3-phosphoshikimate 1-carboxyvinyltransferase"/>
    <property type="match status" value="1"/>
</dbReference>
<dbReference type="FunFam" id="3.65.10.10:FF:000004">
    <property type="entry name" value="3-phosphoshikimate 1-carboxyvinyltransferase"/>
    <property type="match status" value="1"/>
</dbReference>
<dbReference type="Gene3D" id="3.65.10.10">
    <property type="entry name" value="Enolpyruvate transferase domain"/>
    <property type="match status" value="2"/>
</dbReference>
<dbReference type="HAMAP" id="MF_00210">
    <property type="entry name" value="EPSP_synth"/>
    <property type="match status" value="1"/>
</dbReference>
<dbReference type="InterPro" id="IPR001986">
    <property type="entry name" value="Enolpyruvate_Tfrase_dom"/>
</dbReference>
<dbReference type="InterPro" id="IPR036968">
    <property type="entry name" value="Enolpyruvate_Tfrase_sf"/>
</dbReference>
<dbReference type="InterPro" id="IPR006264">
    <property type="entry name" value="EPSP_synthase"/>
</dbReference>
<dbReference type="InterPro" id="IPR023193">
    <property type="entry name" value="EPSP_synthase_CS"/>
</dbReference>
<dbReference type="InterPro" id="IPR013792">
    <property type="entry name" value="RNA3'P_cycl/enolpyr_Trfase_a/b"/>
</dbReference>
<dbReference type="NCBIfam" id="TIGR01356">
    <property type="entry name" value="aroA"/>
    <property type="match status" value="1"/>
</dbReference>
<dbReference type="PANTHER" id="PTHR21090">
    <property type="entry name" value="AROM/DEHYDROQUINATE SYNTHASE"/>
    <property type="match status" value="1"/>
</dbReference>
<dbReference type="PANTHER" id="PTHR21090:SF5">
    <property type="entry name" value="PENTAFUNCTIONAL AROM POLYPEPTIDE"/>
    <property type="match status" value="1"/>
</dbReference>
<dbReference type="Pfam" id="PF00275">
    <property type="entry name" value="EPSP_synthase"/>
    <property type="match status" value="1"/>
</dbReference>
<dbReference type="PIRSF" id="PIRSF000505">
    <property type="entry name" value="EPSPS"/>
    <property type="match status" value="1"/>
</dbReference>
<dbReference type="SUPFAM" id="SSF55205">
    <property type="entry name" value="EPT/RTPC-like"/>
    <property type="match status" value="1"/>
</dbReference>
<dbReference type="PROSITE" id="PS00104">
    <property type="entry name" value="EPSP_SYNTHASE_1"/>
    <property type="match status" value="1"/>
</dbReference>
<dbReference type="PROSITE" id="PS00885">
    <property type="entry name" value="EPSP_SYNTHASE_2"/>
    <property type="match status" value="1"/>
</dbReference>
<sequence>MESLTLQPIARVDGTINLPGSKSVSNRALLLAALAHGKTVLTNLLDSDDVRHMLNALTALGVSYTLSADRTRCEIIGNGGPLHAEGALELFLGNAGTAMRPLAAALCLGSNDIVLTGEPRMKERPIGHLVDALRLGGAKITYLEQENYPPLRLQGGFTGGNVDVDGSVSSQFLTALLMTAPLAPEDTVIRIKGDLVSKPYIDITLNLMKTFGVEIENQHYQQFVVKGGQSYQSPGTYLVEGDASSASYFLAAAAIKGGTVKVTGIGRNSMQGDIRFADVLEKMGATICWGDDYISCTRGELNAIDMDMNHIPDAAMTIATAALFAKGTTTLRNIYNWRVKETDRLFAMATELRKVGAEVEEGHDYIRITPPEKLNFAEIATYNDHRMAMCFSLVALSDTPVTILDPKCTAKTFPDYFEQLARISQAA</sequence>